<organism>
    <name type="scientific">Schistosoma japonicum</name>
    <name type="common">Blood fluke</name>
    <dbReference type="NCBI Taxonomy" id="6182"/>
    <lineage>
        <taxon>Eukaryota</taxon>
        <taxon>Metazoa</taxon>
        <taxon>Spiralia</taxon>
        <taxon>Lophotrochozoa</taxon>
        <taxon>Platyhelminthes</taxon>
        <taxon>Trematoda</taxon>
        <taxon>Digenea</taxon>
        <taxon>Strigeidida</taxon>
        <taxon>Schistosomatoidea</taxon>
        <taxon>Schistosomatidae</taxon>
        <taxon>Schistosoma</taxon>
    </lineage>
</organism>
<comment type="subcellular location">
    <subcellularLocation>
        <location evidence="2">Secreted</location>
    </subcellularLocation>
</comment>
<comment type="domain">
    <text evidence="2">The presence of a 'disulfide through disulfide knot' structurally defines this protein as a knottin.</text>
</comment>
<protein>
    <recommendedName>
        <fullName>Uncharacterized protein SJCHGC09803</fullName>
    </recommendedName>
</protein>
<proteinExistence type="inferred from homology"/>
<accession>Q5BQU6</accession>
<reference key="1">
    <citation type="journal article" date="2006" name="PLoS Pathog.">
        <title>New perspectives on host-parasite interplay by comparative transcriptomic and proteomic analyses of Schistosoma japonicum.</title>
        <authorList>
            <person name="Liu F."/>
            <person name="Lu J."/>
            <person name="Hu W."/>
            <person name="Wang S.-Y."/>
            <person name="Cui S.-J."/>
            <person name="Chi M."/>
            <person name="Yan Q."/>
            <person name="Wang X.-R."/>
            <person name="Song H.-D."/>
            <person name="Xu X.-N."/>
            <person name="Wang J.-J."/>
            <person name="Zhang X.-L."/>
            <person name="Zhang X."/>
            <person name="Wang Z.-Q."/>
            <person name="Xue C.-L."/>
            <person name="Brindley P.J."/>
            <person name="McManus D.P."/>
            <person name="Yang P.-Y."/>
            <person name="Feng Z."/>
            <person name="Chen Z."/>
            <person name="Han Z.-G."/>
        </authorList>
    </citation>
    <scope>NUCLEOTIDE SEQUENCE [LARGE SCALE MRNA]</scope>
</reference>
<sequence>MLKASILFITISLTLMLENSYGKSCRSIGEKCSKTVFDRCCGDSICHLTSPFHGKCVKCLKEGQLCTSDKNCCSDKCNWGKCTKEKHY</sequence>
<keyword id="KW-1015">Disulfide bond</keyword>
<keyword id="KW-0960">Knottin</keyword>
<keyword id="KW-0964">Secreted</keyword>
<keyword id="KW-0732">Signal</keyword>
<dbReference type="EMBL" id="AY915869">
    <property type="protein sequence ID" value="AAX31090.1"/>
    <property type="molecule type" value="mRNA"/>
</dbReference>
<dbReference type="SMR" id="Q5BQU6"/>
<dbReference type="GO" id="GO:0005576">
    <property type="term" value="C:extracellular region"/>
    <property type="evidence" value="ECO:0007669"/>
    <property type="project" value="UniProtKB-SubCell"/>
</dbReference>
<dbReference type="InterPro" id="IPR021712">
    <property type="entry name" value="UPF0506"/>
</dbReference>
<dbReference type="Pfam" id="PF11703">
    <property type="entry name" value="UPF0506"/>
    <property type="match status" value="1"/>
</dbReference>
<feature type="signal peptide" evidence="1">
    <location>
        <begin position="1"/>
        <end position="22"/>
    </location>
</feature>
<feature type="chain" id="PRO_0000311402" description="Uncharacterized protein SJCHGC09803">
    <location>
        <begin position="23"/>
        <end position="88"/>
    </location>
</feature>
<feature type="disulfide bond" evidence="2">
    <location>
        <begin position="59"/>
        <end position="73"/>
    </location>
</feature>
<feature type="disulfide bond" evidence="2">
    <location>
        <begin position="66"/>
        <end position="77"/>
    </location>
</feature>
<feature type="disulfide bond" evidence="2">
    <location>
        <begin position="72"/>
        <end position="82"/>
    </location>
</feature>
<name>SJ803_SCHJA</name>
<evidence type="ECO:0000255" key="1"/>
<evidence type="ECO:0000305" key="2"/>
<gene>
    <name type="ORF">SJCHGC09803</name>
</gene>